<accession>A6H5E5</accession>
<name>MATK_CYCTA</name>
<dbReference type="EMBL" id="AP009339">
    <property type="protein sequence ID" value="BAF64911.1"/>
    <property type="molecule type" value="Genomic_DNA"/>
</dbReference>
<dbReference type="RefSeq" id="YP_001312170.1">
    <property type="nucleotide sequence ID" value="NC_009618.1"/>
</dbReference>
<dbReference type="GeneID" id="5309515"/>
<dbReference type="GO" id="GO:0009507">
    <property type="term" value="C:chloroplast"/>
    <property type="evidence" value="ECO:0007669"/>
    <property type="project" value="UniProtKB-SubCell"/>
</dbReference>
<dbReference type="GO" id="GO:0003723">
    <property type="term" value="F:RNA binding"/>
    <property type="evidence" value="ECO:0007669"/>
    <property type="project" value="UniProtKB-KW"/>
</dbReference>
<dbReference type="GO" id="GO:0006397">
    <property type="term" value="P:mRNA processing"/>
    <property type="evidence" value="ECO:0007669"/>
    <property type="project" value="UniProtKB-KW"/>
</dbReference>
<dbReference type="GO" id="GO:0008380">
    <property type="term" value="P:RNA splicing"/>
    <property type="evidence" value="ECO:0007669"/>
    <property type="project" value="UniProtKB-UniRule"/>
</dbReference>
<dbReference type="GO" id="GO:0008033">
    <property type="term" value="P:tRNA processing"/>
    <property type="evidence" value="ECO:0007669"/>
    <property type="project" value="UniProtKB-KW"/>
</dbReference>
<dbReference type="HAMAP" id="MF_01390">
    <property type="entry name" value="MatK"/>
    <property type="match status" value="1"/>
</dbReference>
<dbReference type="InterPro" id="IPR024937">
    <property type="entry name" value="Domain_X"/>
</dbReference>
<dbReference type="InterPro" id="IPR002866">
    <property type="entry name" value="Maturase_MatK"/>
</dbReference>
<dbReference type="InterPro" id="IPR024942">
    <property type="entry name" value="Maturase_MatK_N"/>
</dbReference>
<dbReference type="PANTHER" id="PTHR34811">
    <property type="entry name" value="MATURASE K"/>
    <property type="match status" value="1"/>
</dbReference>
<dbReference type="PANTHER" id="PTHR34811:SF1">
    <property type="entry name" value="MATURASE K"/>
    <property type="match status" value="1"/>
</dbReference>
<dbReference type="Pfam" id="PF01348">
    <property type="entry name" value="Intron_maturas2"/>
    <property type="match status" value="1"/>
</dbReference>
<dbReference type="Pfam" id="PF01824">
    <property type="entry name" value="MatK_N"/>
    <property type="match status" value="1"/>
</dbReference>
<geneLocation type="chloroplast"/>
<keyword id="KW-0150">Chloroplast</keyword>
<keyword id="KW-0507">mRNA processing</keyword>
<keyword id="KW-0934">Plastid</keyword>
<keyword id="KW-0694">RNA-binding</keyword>
<keyword id="KW-0819">tRNA processing</keyword>
<organism>
    <name type="scientific">Cycas taitungensis</name>
    <name type="common">Prince sago</name>
    <name type="synonym">Cycas taiwaniana</name>
    <dbReference type="NCBI Taxonomy" id="54799"/>
    <lineage>
        <taxon>Eukaryota</taxon>
        <taxon>Viridiplantae</taxon>
        <taxon>Streptophyta</taxon>
        <taxon>Embryophyta</taxon>
        <taxon>Tracheophyta</taxon>
        <taxon>Spermatophyta</taxon>
        <taxon>Cycadidae</taxon>
        <taxon>Cycadales</taxon>
        <taxon>Cycadaceae</taxon>
        <taxon>Cycas</taxon>
    </lineage>
</organism>
<evidence type="ECO:0000255" key="1">
    <source>
        <dbReference type="HAMAP-Rule" id="MF_01390"/>
    </source>
</evidence>
<reference key="1">
    <citation type="journal article" date="2007" name="Mol. Biol. Evol.">
        <title>Chloroplast genome (cpDNA) of Cycas taitungensis and 56 cp protein-coding genes of Gnetum parvifolium: insights into cpDNA evolution and phylogeny of extant seed plants.</title>
        <authorList>
            <person name="Wu C.-S."/>
            <person name="Wang Y.-N."/>
            <person name="Liu S.-M."/>
            <person name="Chaw S.-M."/>
        </authorList>
    </citation>
    <scope>NUCLEOTIDE SEQUENCE [LARGE SCALE GENOMIC DNA]</scope>
</reference>
<feature type="chain" id="PRO_0000355929" description="Maturase K">
    <location>
        <begin position="1"/>
        <end position="520"/>
    </location>
</feature>
<sequence length="520" mass="62385">MDKFRRNGKEDTFRQRRFLYPLLFQENLYAIAYDHYLSRSSSFESMENSSYNDRFSFLTVKRLISRIRQQNGSIVSFGNYNQNKNKLVGHNRNFYSELVLEGLTVVLEVTFSIQSKHYLEGMNEWNSFRSIHSIFPFMEDKFPHSNFLLDIRIPHSTHPEILVRTFRYWIQDAPSLHSLRSVLHEHRNLILSENLDQLILIASKEKTRLSLSVLWNYYVYECESLLVPLWKRFSYSRSLSYGAFLERTTFYRKIEHIVIFSHKSIKDLKKRIWFLKDPSIHYVKDRERFLIALRGTYLLVKKWRYHLTNFWQCHFHLRSQPYRMSIDELSKNCFSFLGYLFSVQMKTFVVKIKMLDDSFITDPITKEFDPIAPTTLLIGYLAKERFCDISGRPTGRLAWTGLTDDNILHRFDRIWRNILHYYSGSSKKDGLYRMKYILRLPCAKTLACKHKSAIRVVRERFGSELFTKSSPKERELISLSFSKTRSQRERIWHSDILQRNPFVNSWWNKQNLQVETPFDR</sequence>
<protein>
    <recommendedName>
        <fullName evidence="1">Maturase K</fullName>
    </recommendedName>
    <alternativeName>
        <fullName evidence="1">Intron maturase</fullName>
    </alternativeName>
</protein>
<comment type="function">
    <text evidence="1">Usually encoded in the trnK tRNA gene intron. Probably assists in splicing its own and other chloroplast group II introns.</text>
</comment>
<comment type="subcellular location">
    <subcellularLocation>
        <location>Plastid</location>
        <location>Chloroplast</location>
    </subcellularLocation>
</comment>
<comment type="similarity">
    <text evidence="1">Belongs to the intron maturase 2 family. MatK subfamily.</text>
</comment>
<proteinExistence type="inferred from homology"/>
<gene>
    <name evidence="1" type="primary">matK</name>
</gene>